<feature type="chain" id="PRO_1000165616" description="Small ribosomal subunit protein uS13">
    <location>
        <begin position="1"/>
        <end position="127"/>
    </location>
</feature>
<feature type="region of interest" description="Disordered" evidence="2">
    <location>
        <begin position="93"/>
        <end position="127"/>
    </location>
</feature>
<feature type="compositionally biased region" description="Basic residues" evidence="2">
    <location>
        <begin position="101"/>
        <end position="127"/>
    </location>
</feature>
<keyword id="KW-1185">Reference proteome</keyword>
<keyword id="KW-0687">Ribonucleoprotein</keyword>
<keyword id="KW-0689">Ribosomal protein</keyword>
<keyword id="KW-0694">RNA-binding</keyword>
<keyword id="KW-0699">rRNA-binding</keyword>
<keyword id="KW-0820">tRNA-binding</keyword>
<dbReference type="EMBL" id="CP000806">
    <property type="protein sequence ID" value="ACB53385.1"/>
    <property type="molecule type" value="Genomic_DNA"/>
</dbReference>
<dbReference type="RefSeq" id="WP_009543877.1">
    <property type="nucleotide sequence ID" value="NC_010546.1"/>
</dbReference>
<dbReference type="SMR" id="B1WQT3"/>
<dbReference type="STRING" id="43989.cce_4037"/>
<dbReference type="KEGG" id="cyt:cce_4037"/>
<dbReference type="eggNOG" id="COG0099">
    <property type="taxonomic scope" value="Bacteria"/>
</dbReference>
<dbReference type="HOGENOM" id="CLU_103849_1_2_3"/>
<dbReference type="OrthoDB" id="9803610at2"/>
<dbReference type="Proteomes" id="UP000001203">
    <property type="component" value="Chromosome circular"/>
</dbReference>
<dbReference type="GO" id="GO:0005829">
    <property type="term" value="C:cytosol"/>
    <property type="evidence" value="ECO:0007669"/>
    <property type="project" value="TreeGrafter"/>
</dbReference>
<dbReference type="GO" id="GO:0015935">
    <property type="term" value="C:small ribosomal subunit"/>
    <property type="evidence" value="ECO:0007669"/>
    <property type="project" value="TreeGrafter"/>
</dbReference>
<dbReference type="GO" id="GO:0019843">
    <property type="term" value="F:rRNA binding"/>
    <property type="evidence" value="ECO:0007669"/>
    <property type="project" value="UniProtKB-UniRule"/>
</dbReference>
<dbReference type="GO" id="GO:0003735">
    <property type="term" value="F:structural constituent of ribosome"/>
    <property type="evidence" value="ECO:0007669"/>
    <property type="project" value="InterPro"/>
</dbReference>
<dbReference type="GO" id="GO:0000049">
    <property type="term" value="F:tRNA binding"/>
    <property type="evidence" value="ECO:0007669"/>
    <property type="project" value="UniProtKB-UniRule"/>
</dbReference>
<dbReference type="GO" id="GO:0006412">
    <property type="term" value="P:translation"/>
    <property type="evidence" value="ECO:0007669"/>
    <property type="project" value="UniProtKB-UniRule"/>
</dbReference>
<dbReference type="FunFam" id="1.10.8.50:FF:000001">
    <property type="entry name" value="30S ribosomal protein S13"/>
    <property type="match status" value="1"/>
</dbReference>
<dbReference type="FunFam" id="4.10.910.10:FF:000001">
    <property type="entry name" value="30S ribosomal protein S13"/>
    <property type="match status" value="1"/>
</dbReference>
<dbReference type="Gene3D" id="1.10.8.50">
    <property type="match status" value="1"/>
</dbReference>
<dbReference type="Gene3D" id="4.10.910.10">
    <property type="entry name" value="30s ribosomal protein s13, domain 2"/>
    <property type="match status" value="1"/>
</dbReference>
<dbReference type="HAMAP" id="MF_01315">
    <property type="entry name" value="Ribosomal_uS13"/>
    <property type="match status" value="1"/>
</dbReference>
<dbReference type="InterPro" id="IPR027437">
    <property type="entry name" value="Rbsml_uS13_C"/>
</dbReference>
<dbReference type="InterPro" id="IPR001892">
    <property type="entry name" value="Ribosomal_uS13"/>
</dbReference>
<dbReference type="InterPro" id="IPR010979">
    <property type="entry name" value="Ribosomal_uS13-like_H2TH"/>
</dbReference>
<dbReference type="InterPro" id="IPR019980">
    <property type="entry name" value="Ribosomal_uS13_bac-type"/>
</dbReference>
<dbReference type="InterPro" id="IPR018269">
    <property type="entry name" value="Ribosomal_uS13_CS"/>
</dbReference>
<dbReference type="NCBIfam" id="TIGR03631">
    <property type="entry name" value="uS13_bact"/>
    <property type="match status" value="1"/>
</dbReference>
<dbReference type="PANTHER" id="PTHR10871">
    <property type="entry name" value="30S RIBOSOMAL PROTEIN S13/40S RIBOSOMAL PROTEIN S18"/>
    <property type="match status" value="1"/>
</dbReference>
<dbReference type="PANTHER" id="PTHR10871:SF1">
    <property type="entry name" value="SMALL RIBOSOMAL SUBUNIT PROTEIN US13M"/>
    <property type="match status" value="1"/>
</dbReference>
<dbReference type="Pfam" id="PF00416">
    <property type="entry name" value="Ribosomal_S13"/>
    <property type="match status" value="1"/>
</dbReference>
<dbReference type="PIRSF" id="PIRSF002134">
    <property type="entry name" value="Ribosomal_S13"/>
    <property type="match status" value="1"/>
</dbReference>
<dbReference type="SUPFAM" id="SSF46946">
    <property type="entry name" value="S13-like H2TH domain"/>
    <property type="match status" value="1"/>
</dbReference>
<dbReference type="PROSITE" id="PS00646">
    <property type="entry name" value="RIBOSOMAL_S13_1"/>
    <property type="match status" value="1"/>
</dbReference>
<dbReference type="PROSITE" id="PS50159">
    <property type="entry name" value="RIBOSOMAL_S13_2"/>
    <property type="match status" value="1"/>
</dbReference>
<comment type="function">
    <text evidence="1">Located at the top of the head of the 30S subunit, it contacts several helices of the 16S rRNA. In the 70S ribosome it contacts the 23S rRNA (bridge B1a) and protein L5 of the 50S subunit (bridge B1b), connecting the 2 subunits; these bridges are implicated in subunit movement. Contacts the tRNAs in the A and P-sites.</text>
</comment>
<comment type="subunit">
    <text evidence="1">Part of the 30S ribosomal subunit. Forms a loose heterodimer with protein S19. Forms two bridges to the 50S subunit in the 70S ribosome.</text>
</comment>
<comment type="similarity">
    <text evidence="1">Belongs to the universal ribosomal protein uS13 family.</text>
</comment>
<name>RS13_CROS5</name>
<evidence type="ECO:0000255" key="1">
    <source>
        <dbReference type="HAMAP-Rule" id="MF_01315"/>
    </source>
</evidence>
<evidence type="ECO:0000256" key="2">
    <source>
        <dbReference type="SAM" id="MobiDB-lite"/>
    </source>
</evidence>
<evidence type="ECO:0000305" key="3"/>
<proteinExistence type="inferred from homology"/>
<sequence length="127" mass="14546">MARISGVDLPRDKRVEIGLTYLYGIGLSRSQEILAETGVNPDTRVRDLSDEDVAKLRAYIENNYQIEGDLRRWEAMNIKRLADIGTYRGRRHRQGLPVRGQRTRTNGRTRRGRRVTVAGKKKAPAKK</sequence>
<accession>B1WQT3</accession>
<organism>
    <name type="scientific">Crocosphaera subtropica (strain ATCC 51142 / BH68)</name>
    <name type="common">Cyanothece sp. (strain ATCC 51142)</name>
    <dbReference type="NCBI Taxonomy" id="43989"/>
    <lineage>
        <taxon>Bacteria</taxon>
        <taxon>Bacillati</taxon>
        <taxon>Cyanobacteriota</taxon>
        <taxon>Cyanophyceae</taxon>
        <taxon>Oscillatoriophycideae</taxon>
        <taxon>Chroococcales</taxon>
        <taxon>Aphanothecaceae</taxon>
        <taxon>Crocosphaera</taxon>
        <taxon>Crocosphaera subtropica</taxon>
    </lineage>
</organism>
<reference key="1">
    <citation type="journal article" date="2008" name="Proc. Natl. Acad. Sci. U.S.A.">
        <title>The genome of Cyanothece 51142, a unicellular diazotrophic cyanobacterium important in the marine nitrogen cycle.</title>
        <authorList>
            <person name="Welsh E.A."/>
            <person name="Liberton M."/>
            <person name="Stoeckel J."/>
            <person name="Loh T."/>
            <person name="Elvitigala T."/>
            <person name="Wang C."/>
            <person name="Wollam A."/>
            <person name="Fulton R.S."/>
            <person name="Clifton S.W."/>
            <person name="Jacobs J.M."/>
            <person name="Aurora R."/>
            <person name="Ghosh B.K."/>
            <person name="Sherman L.A."/>
            <person name="Smith R.D."/>
            <person name="Wilson R.K."/>
            <person name="Pakrasi H.B."/>
        </authorList>
    </citation>
    <scope>NUCLEOTIDE SEQUENCE [LARGE SCALE GENOMIC DNA]</scope>
    <source>
        <strain>ATCC 51142 / BH68</strain>
    </source>
</reference>
<protein>
    <recommendedName>
        <fullName evidence="1">Small ribosomal subunit protein uS13</fullName>
    </recommendedName>
    <alternativeName>
        <fullName evidence="3">30S ribosomal protein S13</fullName>
    </alternativeName>
</protein>
<gene>
    <name evidence="1" type="primary">rpsM</name>
    <name evidence="1" type="synonym">rps13</name>
    <name type="ordered locus">cce_4037</name>
</gene>